<keyword id="KW-0046">Antibiotic resistance</keyword>
<keyword id="KW-0441">Lipid A biosynthesis</keyword>
<keyword id="KW-0444">Lipid biosynthesis</keyword>
<keyword id="KW-0443">Lipid metabolism</keyword>
<keyword id="KW-0448">Lipopolysaccharide biosynthesis</keyword>
<keyword id="KW-0511">Multifunctional enzyme</keyword>
<keyword id="KW-0520">NAD</keyword>
<keyword id="KW-0560">Oxidoreductase</keyword>
<keyword id="KW-1185">Reference proteome</keyword>
<keyword id="KW-0808">Transferase</keyword>
<accession>Q8D341</accession>
<dbReference type="EC" id="2.1.2.13" evidence="1"/>
<dbReference type="EC" id="1.1.1.305" evidence="1"/>
<dbReference type="EMBL" id="BA000021">
    <property type="protein sequence ID" value="BAC24306.1"/>
    <property type="molecule type" value="Genomic_DNA"/>
</dbReference>
<dbReference type="SMR" id="Q8D341"/>
<dbReference type="STRING" id="36870.gene:10368648"/>
<dbReference type="KEGG" id="wbr:b2255"/>
<dbReference type="eggNOG" id="COG0223">
    <property type="taxonomic scope" value="Bacteria"/>
</dbReference>
<dbReference type="eggNOG" id="COG0451">
    <property type="taxonomic scope" value="Bacteria"/>
</dbReference>
<dbReference type="HOGENOM" id="CLU_007383_23_1_6"/>
<dbReference type="OrthoDB" id="9802815at2"/>
<dbReference type="UniPathway" id="UPA00030"/>
<dbReference type="UniPathway" id="UPA00032">
    <property type="reaction ID" value="UER00492"/>
</dbReference>
<dbReference type="UniPathway" id="UPA00032">
    <property type="reaction ID" value="UER00494"/>
</dbReference>
<dbReference type="Proteomes" id="UP000000562">
    <property type="component" value="Chromosome"/>
</dbReference>
<dbReference type="GO" id="GO:0016020">
    <property type="term" value="C:membrane"/>
    <property type="evidence" value="ECO:0007669"/>
    <property type="project" value="GOC"/>
</dbReference>
<dbReference type="GO" id="GO:0016831">
    <property type="term" value="F:carboxy-lyase activity"/>
    <property type="evidence" value="ECO:0007669"/>
    <property type="project" value="InterPro"/>
</dbReference>
<dbReference type="GO" id="GO:0099619">
    <property type="term" value="F:UDP-4-amino-4-deoxy-L-arabinose formyltransferase activity"/>
    <property type="evidence" value="ECO:0007669"/>
    <property type="project" value="UniProtKB-EC"/>
</dbReference>
<dbReference type="GO" id="GO:0099618">
    <property type="term" value="F:UDP-glucuronate dehydrogenase activity"/>
    <property type="evidence" value="ECO:0007669"/>
    <property type="project" value="UniProtKB-EC"/>
</dbReference>
<dbReference type="GO" id="GO:0009245">
    <property type="term" value="P:lipid A biosynthetic process"/>
    <property type="evidence" value="ECO:0007669"/>
    <property type="project" value="UniProtKB-KW"/>
</dbReference>
<dbReference type="GO" id="GO:0009103">
    <property type="term" value="P:lipopolysaccharide biosynthetic process"/>
    <property type="evidence" value="ECO:0007669"/>
    <property type="project" value="UniProtKB-UniRule"/>
</dbReference>
<dbReference type="GO" id="GO:0046677">
    <property type="term" value="P:response to antibiotic"/>
    <property type="evidence" value="ECO:0007669"/>
    <property type="project" value="UniProtKB-KW"/>
</dbReference>
<dbReference type="CDD" id="cd08702">
    <property type="entry name" value="Arna_FMT_C"/>
    <property type="match status" value="1"/>
</dbReference>
<dbReference type="CDD" id="cd05257">
    <property type="entry name" value="Arna_like_SDR_e"/>
    <property type="match status" value="1"/>
</dbReference>
<dbReference type="CDD" id="cd08644">
    <property type="entry name" value="FMT_core_ArnA_N"/>
    <property type="match status" value="1"/>
</dbReference>
<dbReference type="Gene3D" id="3.40.50.12230">
    <property type="match status" value="1"/>
</dbReference>
<dbReference type="Gene3D" id="3.40.50.720">
    <property type="entry name" value="NAD(P)-binding Rossmann-like Domain"/>
    <property type="match status" value="1"/>
</dbReference>
<dbReference type="HAMAP" id="MF_01166">
    <property type="entry name" value="ArnA"/>
    <property type="match status" value="1"/>
</dbReference>
<dbReference type="InterPro" id="IPR045869">
    <property type="entry name" value="Arna-like_SDR_e"/>
</dbReference>
<dbReference type="InterPro" id="IPR021168">
    <property type="entry name" value="Bifun_polymyxin_resist_ArnA"/>
</dbReference>
<dbReference type="InterPro" id="IPR001509">
    <property type="entry name" value="Epimerase_deHydtase"/>
</dbReference>
<dbReference type="InterPro" id="IPR005793">
    <property type="entry name" value="Formyl_trans_C"/>
</dbReference>
<dbReference type="InterPro" id="IPR002376">
    <property type="entry name" value="Formyl_transf_N"/>
</dbReference>
<dbReference type="InterPro" id="IPR036477">
    <property type="entry name" value="Formyl_transf_N_sf"/>
</dbReference>
<dbReference type="InterPro" id="IPR011034">
    <property type="entry name" value="Formyl_transferase-like_C_sf"/>
</dbReference>
<dbReference type="InterPro" id="IPR001555">
    <property type="entry name" value="GART_AS"/>
</dbReference>
<dbReference type="InterPro" id="IPR050177">
    <property type="entry name" value="Lipid_A_modif_metabolic_enz"/>
</dbReference>
<dbReference type="InterPro" id="IPR036291">
    <property type="entry name" value="NAD(P)-bd_dom_sf"/>
</dbReference>
<dbReference type="NCBIfam" id="NF005998">
    <property type="entry name" value="PRK08125.1"/>
    <property type="match status" value="1"/>
</dbReference>
<dbReference type="NCBIfam" id="NF008872">
    <property type="entry name" value="PRK11908.1"/>
    <property type="match status" value="1"/>
</dbReference>
<dbReference type="PANTHER" id="PTHR43245">
    <property type="entry name" value="BIFUNCTIONAL POLYMYXIN RESISTANCE PROTEIN ARNA"/>
    <property type="match status" value="1"/>
</dbReference>
<dbReference type="PANTHER" id="PTHR43245:SF13">
    <property type="entry name" value="UDP-D-APIOSE_UDP-D-XYLOSE SYNTHASE 2"/>
    <property type="match status" value="1"/>
</dbReference>
<dbReference type="Pfam" id="PF01370">
    <property type="entry name" value="Epimerase"/>
    <property type="match status" value="1"/>
</dbReference>
<dbReference type="Pfam" id="PF02911">
    <property type="entry name" value="Formyl_trans_C"/>
    <property type="match status" value="1"/>
</dbReference>
<dbReference type="Pfam" id="PF00551">
    <property type="entry name" value="Formyl_trans_N"/>
    <property type="match status" value="1"/>
</dbReference>
<dbReference type="PIRSF" id="PIRSF036506">
    <property type="entry name" value="Bifun_polymyxin_resist_ArnA"/>
    <property type="match status" value="1"/>
</dbReference>
<dbReference type="SUPFAM" id="SSF50486">
    <property type="entry name" value="FMT C-terminal domain-like"/>
    <property type="match status" value="1"/>
</dbReference>
<dbReference type="SUPFAM" id="SSF53328">
    <property type="entry name" value="Formyltransferase"/>
    <property type="match status" value="1"/>
</dbReference>
<dbReference type="SUPFAM" id="SSF51735">
    <property type="entry name" value="NAD(P)-binding Rossmann-fold domains"/>
    <property type="match status" value="1"/>
</dbReference>
<evidence type="ECO:0000255" key="1">
    <source>
        <dbReference type="HAMAP-Rule" id="MF_01166"/>
    </source>
</evidence>
<reference key="1">
    <citation type="journal article" date="2002" name="Nat. Genet.">
        <title>Genome sequence of the endocellular obligate symbiont of tsetse flies, Wigglesworthia glossinidia.</title>
        <authorList>
            <person name="Akman L."/>
            <person name="Yamashita A."/>
            <person name="Watanabe H."/>
            <person name="Oshima K."/>
            <person name="Shiba T."/>
            <person name="Hattori M."/>
            <person name="Aksoy S."/>
        </authorList>
    </citation>
    <scope>NUCLEOTIDE SEQUENCE [LARGE SCALE GENOMIC DNA]</scope>
</reference>
<feature type="chain" id="PRO_0000083111" description="Bifunctional polymyxin resistance protein ArnA">
    <location>
        <begin position="1"/>
        <end position="654"/>
    </location>
</feature>
<feature type="region of interest" description="Formyltransferase ArnAFT">
    <location>
        <begin position="1"/>
        <end position="303"/>
    </location>
</feature>
<feature type="region of interest" description="Dehydrogenase ArnADH">
    <location>
        <begin position="313"/>
        <end position="654"/>
    </location>
</feature>
<feature type="active site" description="Proton donor; for formyltransferase activity" evidence="1">
    <location>
        <position position="105"/>
    </location>
</feature>
<feature type="active site" description="Proton acceptor; for decarboxylase activity" evidence="1">
    <location>
        <position position="433"/>
    </location>
</feature>
<feature type="active site" description="Proton donor; for decarboxylase activity" evidence="1">
    <location>
        <position position="618"/>
    </location>
</feature>
<feature type="binding site" evidence="1">
    <location>
        <begin position="137"/>
        <end position="141"/>
    </location>
    <ligand>
        <name>(6R)-10-formyltetrahydrofolate</name>
        <dbReference type="ChEBI" id="CHEBI:195366"/>
    </ligand>
</feature>
<feature type="binding site" evidence="1">
    <location>
        <position position="346"/>
    </location>
    <ligand>
        <name>NAD(+)</name>
        <dbReference type="ChEBI" id="CHEBI:57540"/>
    </ligand>
</feature>
<feature type="binding site" evidence="1">
    <location>
        <begin position="367"/>
        <end position="368"/>
    </location>
    <ligand>
        <name>NAD(+)</name>
        <dbReference type="ChEBI" id="CHEBI:57540"/>
    </ligand>
</feature>
<feature type="binding site" evidence="1">
    <location>
        <position position="392"/>
    </location>
    <ligand>
        <name>UDP-alpha-D-glucuronate</name>
        <dbReference type="ChEBI" id="CHEBI:58052"/>
    </ligand>
</feature>
<feature type="binding site" evidence="1">
    <location>
        <position position="397"/>
    </location>
    <ligand>
        <name>UDP-alpha-D-glucuronate</name>
        <dbReference type="ChEBI" id="CHEBI:58052"/>
    </ligand>
</feature>
<feature type="binding site" evidence="1">
    <location>
        <begin position="431"/>
        <end position="432"/>
    </location>
    <ligand>
        <name>UDP-alpha-D-glucuronate</name>
        <dbReference type="ChEBI" id="CHEBI:58052"/>
    </ligand>
</feature>
<feature type="binding site" evidence="1">
    <location>
        <position position="459"/>
    </location>
    <ligand>
        <name>UDP-alpha-D-glucuronate</name>
        <dbReference type="ChEBI" id="CHEBI:58052"/>
    </ligand>
</feature>
<feature type="binding site" evidence="1">
    <location>
        <position position="491"/>
    </location>
    <ligand>
        <name>UDP-alpha-D-glucuronate</name>
        <dbReference type="ChEBI" id="CHEBI:58052"/>
    </ligand>
</feature>
<feature type="binding site" evidence="1">
    <location>
        <begin position="532"/>
        <end position="534"/>
    </location>
    <ligand>
        <name>UDP-alpha-D-glucuronate</name>
        <dbReference type="ChEBI" id="CHEBI:58052"/>
    </ligand>
</feature>
<feature type="binding site" evidence="1">
    <location>
        <position position="612"/>
    </location>
    <ligand>
        <name>UDP-alpha-D-glucuronate</name>
        <dbReference type="ChEBI" id="CHEBI:58052"/>
    </ligand>
</feature>
<feature type="site" description="Transition state stabilizer" evidence="1">
    <location>
        <position position="103"/>
    </location>
</feature>
<feature type="site" description="Raises pKa of active site His" evidence="1">
    <location>
        <position position="141"/>
    </location>
</feature>
<name>ARNA_WIGBR</name>
<sequence length="654" mass="76367">MKVIVFAYHEIGYIGLSCLIKLGFKVLSVITHIDDHASEKIFFSSVKKKSLKHKIPVFYPKNINNLKWIDYLSKLKPDIIFSFYYRKILSEDILKIPKLGSFNLHGSLLPKYRGCSPLNWVLINGEKTTGVTLHRMTKKIDHGSILSQYSIKIEEKDTSKSLYKKLCYASMYILNKTLPMILKNKINEIDCTDDFSSYFHKRYPKDGLIDWNQSANNIYNLIRALTKPWPGAFSYLFDKKIIIWKSKISFESYKTPGTILNFNPLIISCKKKSLEILSAQYTECNILNKRNIENISRIKGKKLIIKNIKSFKNLKKILILGVNGFIGYHITNLLLKYNNYKIYGIDIKNNLVKSFIGNEKFCFIKGDIKQYYNWVKKKIKKCDIILPLIAIARPMQYIKNPLKVFKIDFEENLKIIRYCVKYKKRIIFPSTSEVYGMCKDDYFDEENSNLVTGAIKNQRWIYSSSKQLLDRIIWAYGVKNNLNFTIFRPFNWIGPGLDDFKIAEKQNARVTTQIIFNLINGLPVTIVNNGNQKRCFTDIDDGIEALFEIIKNKNNKCNKKIINIGNPHNEYTIMQLTKIIINIIYSNNRNYNFPKFSGFNMLSGTNYYGEGYQDIDRRKPNIDIAKKLLNWTPKTKIRITLRKIINFFINNNTS</sequence>
<organism>
    <name type="scientific">Wigglesworthia glossinidia brevipalpis</name>
    <dbReference type="NCBI Taxonomy" id="36870"/>
    <lineage>
        <taxon>Bacteria</taxon>
        <taxon>Pseudomonadati</taxon>
        <taxon>Pseudomonadota</taxon>
        <taxon>Gammaproteobacteria</taxon>
        <taxon>Enterobacterales</taxon>
        <taxon>Erwiniaceae</taxon>
        <taxon>Wigglesworthia</taxon>
    </lineage>
</organism>
<protein>
    <recommendedName>
        <fullName evidence="1">Bifunctional polymyxin resistance protein ArnA</fullName>
    </recommendedName>
    <domain>
        <recommendedName>
            <fullName evidence="1">UDP-4-amino-4-deoxy-L-arabinose formyltransferase</fullName>
            <ecNumber evidence="1">2.1.2.13</ecNumber>
        </recommendedName>
        <alternativeName>
            <fullName evidence="1">ArnAFT</fullName>
        </alternativeName>
        <alternativeName>
            <fullName evidence="1">UDP-L-Ara4N formyltransferase</fullName>
        </alternativeName>
    </domain>
    <domain>
        <recommendedName>
            <fullName evidence="1">UDP-glucuronic acid oxidase, UDP-4-keto-hexauronic acid decarboxylating</fullName>
            <ecNumber evidence="1">1.1.1.305</ecNumber>
        </recommendedName>
        <alternativeName>
            <fullName evidence="1">ArnADH</fullName>
        </alternativeName>
        <alternativeName>
            <fullName evidence="1">UDP-GlcUA decarboxylase</fullName>
        </alternativeName>
        <alternativeName>
            <fullName evidence="1">UDP-glucuronic acid dehydrogenase</fullName>
        </alternativeName>
    </domain>
</protein>
<comment type="function">
    <text evidence="1">Bifunctional enzyme that catalyzes the oxidative decarboxylation of UDP-glucuronic acid (UDP-GlcUA) to UDP-4-keto-arabinose (UDP-Ara4O) and the addition of a formyl group to UDP-4-amino-4-deoxy-L-arabinose (UDP-L-Ara4N) to form UDP-L-4-formamido-arabinose (UDP-L-Ara4FN). The modified arabinose is attached to lipid A and is required for resistance to polymyxin and cationic antimicrobial peptides.</text>
</comment>
<comment type="catalytic activity">
    <reaction evidence="1">
        <text>UDP-alpha-D-glucuronate + NAD(+) = UDP-beta-L-threo-pentopyranos-4-ulose + CO2 + NADH</text>
        <dbReference type="Rhea" id="RHEA:24702"/>
        <dbReference type="ChEBI" id="CHEBI:16526"/>
        <dbReference type="ChEBI" id="CHEBI:57540"/>
        <dbReference type="ChEBI" id="CHEBI:57945"/>
        <dbReference type="ChEBI" id="CHEBI:58052"/>
        <dbReference type="ChEBI" id="CHEBI:58710"/>
        <dbReference type="EC" id="1.1.1.305"/>
    </reaction>
</comment>
<comment type="catalytic activity">
    <reaction evidence="1">
        <text>UDP-4-amino-4-deoxy-beta-L-arabinose + (6R)-10-formyltetrahydrofolate = UDP-4-deoxy-4-formamido-beta-L-arabinose + (6S)-5,6,7,8-tetrahydrofolate + H(+)</text>
        <dbReference type="Rhea" id="RHEA:24706"/>
        <dbReference type="ChEBI" id="CHEBI:15378"/>
        <dbReference type="ChEBI" id="CHEBI:57453"/>
        <dbReference type="ChEBI" id="CHEBI:58708"/>
        <dbReference type="ChEBI" id="CHEBI:58709"/>
        <dbReference type="ChEBI" id="CHEBI:195366"/>
        <dbReference type="EC" id="2.1.2.13"/>
    </reaction>
</comment>
<comment type="pathway">
    <text evidence="1">Nucleotide-sugar biosynthesis; UDP-4-deoxy-4-formamido-beta-L-arabinose biosynthesis; UDP-4-deoxy-4-formamido-beta-L-arabinose from UDP-alpha-D-glucuronate: step 1/3.</text>
</comment>
<comment type="pathway">
    <text evidence="1">Nucleotide-sugar biosynthesis; UDP-4-deoxy-4-formamido-beta-L-arabinose biosynthesis; UDP-4-deoxy-4-formamido-beta-L-arabinose from UDP-alpha-D-glucuronate: step 3/3.</text>
</comment>
<comment type="pathway">
    <text evidence="1">Bacterial outer membrane biogenesis; lipopolysaccharide biosynthesis.</text>
</comment>
<comment type="subunit">
    <text evidence="1">Homohexamer, formed by a dimer of trimers.</text>
</comment>
<comment type="similarity">
    <text evidence="1">In the N-terminal section; belongs to the Fmt family. UDP-L-Ara4N formyltransferase subfamily.</text>
</comment>
<comment type="similarity">
    <text evidence="1">In the C-terminal section; belongs to the NAD(P)-dependent epimerase/dehydratase family. UDP-glucuronic acid decarboxylase subfamily.</text>
</comment>
<proteinExistence type="inferred from homology"/>
<gene>
    <name evidence="1" type="primary">arnA</name>
    <name type="ordered locus">WIGBR1600</name>
</gene>